<name>DEF2_PROMM</name>
<evidence type="ECO:0000255" key="1">
    <source>
        <dbReference type="HAMAP-Rule" id="MF_00163"/>
    </source>
</evidence>
<comment type="function">
    <text evidence="1">Removes the formyl group from the N-terminal Met of newly synthesized proteins. Requires at least a dipeptide for an efficient rate of reaction. N-terminal L-methionine is a prerequisite for activity but the enzyme has broad specificity at other positions.</text>
</comment>
<comment type="catalytic activity">
    <reaction evidence="1">
        <text>N-terminal N-formyl-L-methionyl-[peptide] + H2O = N-terminal L-methionyl-[peptide] + formate</text>
        <dbReference type="Rhea" id="RHEA:24420"/>
        <dbReference type="Rhea" id="RHEA-COMP:10639"/>
        <dbReference type="Rhea" id="RHEA-COMP:10640"/>
        <dbReference type="ChEBI" id="CHEBI:15377"/>
        <dbReference type="ChEBI" id="CHEBI:15740"/>
        <dbReference type="ChEBI" id="CHEBI:49298"/>
        <dbReference type="ChEBI" id="CHEBI:64731"/>
        <dbReference type="EC" id="3.5.1.88"/>
    </reaction>
</comment>
<comment type="cofactor">
    <cofactor evidence="1">
        <name>Fe(2+)</name>
        <dbReference type="ChEBI" id="CHEBI:29033"/>
    </cofactor>
    <text evidence="1">Binds 1 Fe(2+) ion.</text>
</comment>
<comment type="similarity">
    <text evidence="1">Belongs to the polypeptide deformylase family.</text>
</comment>
<accession>Q7V5F9</accession>
<sequence>MARSFAQLARTAEKTKGSVAVPKEPLDHPPLQIHTLGNGVLRQSTRRIGKVDESVRDLVRDMLRSMYAAKGIGLAAPQVGIHKQLLVLDLDLETPTTPPVVLINPEIISSSATVETYEEGCLSIPGVYLNVVRPSEIVLSFRDEMGRPRKMKADGLMARCIQHEMDHLEGVLFVDRVTDENELSLELKEHGFKRADVRPLV</sequence>
<feature type="chain" id="PRO_0000082817" description="Peptide deformylase 2">
    <location>
        <begin position="1"/>
        <end position="201"/>
    </location>
</feature>
<feature type="active site" evidence="1">
    <location>
        <position position="164"/>
    </location>
</feature>
<feature type="binding site" evidence="1">
    <location>
        <position position="121"/>
    </location>
    <ligand>
        <name>Fe cation</name>
        <dbReference type="ChEBI" id="CHEBI:24875"/>
    </ligand>
</feature>
<feature type="binding site" evidence="1">
    <location>
        <position position="163"/>
    </location>
    <ligand>
        <name>Fe cation</name>
        <dbReference type="ChEBI" id="CHEBI:24875"/>
    </ligand>
</feature>
<feature type="binding site" evidence="1">
    <location>
        <position position="167"/>
    </location>
    <ligand>
        <name>Fe cation</name>
        <dbReference type="ChEBI" id="CHEBI:24875"/>
    </ligand>
</feature>
<gene>
    <name evidence="1" type="primary">def2</name>
    <name type="ordered locus">PMT_1601</name>
</gene>
<dbReference type="EC" id="3.5.1.88" evidence="1"/>
<dbReference type="EMBL" id="BX548175">
    <property type="protein sequence ID" value="CAE21776.1"/>
    <property type="molecule type" value="Genomic_DNA"/>
</dbReference>
<dbReference type="SMR" id="Q7V5F9"/>
<dbReference type="KEGG" id="pmt:PMT_1601"/>
<dbReference type="eggNOG" id="COG0242">
    <property type="taxonomic scope" value="Bacteria"/>
</dbReference>
<dbReference type="HOGENOM" id="CLU_061901_4_2_3"/>
<dbReference type="OrthoDB" id="9784988at2"/>
<dbReference type="Proteomes" id="UP000001423">
    <property type="component" value="Chromosome"/>
</dbReference>
<dbReference type="GO" id="GO:0046872">
    <property type="term" value="F:metal ion binding"/>
    <property type="evidence" value="ECO:0007669"/>
    <property type="project" value="UniProtKB-KW"/>
</dbReference>
<dbReference type="GO" id="GO:0042586">
    <property type="term" value="F:peptide deformylase activity"/>
    <property type="evidence" value="ECO:0007669"/>
    <property type="project" value="UniProtKB-UniRule"/>
</dbReference>
<dbReference type="GO" id="GO:0043686">
    <property type="term" value="P:co-translational protein modification"/>
    <property type="evidence" value="ECO:0007669"/>
    <property type="project" value="TreeGrafter"/>
</dbReference>
<dbReference type="GO" id="GO:0006412">
    <property type="term" value="P:translation"/>
    <property type="evidence" value="ECO:0007669"/>
    <property type="project" value="UniProtKB-UniRule"/>
</dbReference>
<dbReference type="CDD" id="cd00487">
    <property type="entry name" value="Pep_deformylase"/>
    <property type="match status" value="1"/>
</dbReference>
<dbReference type="FunFam" id="3.90.45.10:FF:000005">
    <property type="entry name" value="Peptide deformylase"/>
    <property type="match status" value="1"/>
</dbReference>
<dbReference type="Gene3D" id="3.90.45.10">
    <property type="entry name" value="Peptide deformylase"/>
    <property type="match status" value="1"/>
</dbReference>
<dbReference type="HAMAP" id="MF_00163">
    <property type="entry name" value="Pep_deformylase"/>
    <property type="match status" value="1"/>
</dbReference>
<dbReference type="InterPro" id="IPR023635">
    <property type="entry name" value="Peptide_deformylase"/>
</dbReference>
<dbReference type="InterPro" id="IPR036821">
    <property type="entry name" value="Peptide_deformylase_sf"/>
</dbReference>
<dbReference type="NCBIfam" id="TIGR00079">
    <property type="entry name" value="pept_deformyl"/>
    <property type="match status" value="1"/>
</dbReference>
<dbReference type="NCBIfam" id="NF001159">
    <property type="entry name" value="PRK00150.1-3"/>
    <property type="match status" value="1"/>
</dbReference>
<dbReference type="PANTHER" id="PTHR10458">
    <property type="entry name" value="PEPTIDE DEFORMYLASE"/>
    <property type="match status" value="1"/>
</dbReference>
<dbReference type="PANTHER" id="PTHR10458:SF22">
    <property type="entry name" value="PEPTIDE DEFORMYLASE"/>
    <property type="match status" value="1"/>
</dbReference>
<dbReference type="Pfam" id="PF01327">
    <property type="entry name" value="Pep_deformylase"/>
    <property type="match status" value="1"/>
</dbReference>
<dbReference type="PIRSF" id="PIRSF004749">
    <property type="entry name" value="Pep_def"/>
    <property type="match status" value="1"/>
</dbReference>
<dbReference type="PRINTS" id="PR01576">
    <property type="entry name" value="PDEFORMYLASE"/>
</dbReference>
<dbReference type="SUPFAM" id="SSF56420">
    <property type="entry name" value="Peptide deformylase"/>
    <property type="match status" value="1"/>
</dbReference>
<organism>
    <name type="scientific">Prochlorococcus marinus (strain MIT 9313)</name>
    <dbReference type="NCBI Taxonomy" id="74547"/>
    <lineage>
        <taxon>Bacteria</taxon>
        <taxon>Bacillati</taxon>
        <taxon>Cyanobacteriota</taxon>
        <taxon>Cyanophyceae</taxon>
        <taxon>Synechococcales</taxon>
        <taxon>Prochlorococcaceae</taxon>
        <taxon>Prochlorococcus</taxon>
    </lineage>
</organism>
<reference key="1">
    <citation type="journal article" date="2003" name="Nature">
        <title>Genome divergence in two Prochlorococcus ecotypes reflects oceanic niche differentiation.</title>
        <authorList>
            <person name="Rocap G."/>
            <person name="Larimer F.W."/>
            <person name="Lamerdin J.E."/>
            <person name="Malfatti S."/>
            <person name="Chain P."/>
            <person name="Ahlgren N.A."/>
            <person name="Arellano A."/>
            <person name="Coleman M."/>
            <person name="Hauser L."/>
            <person name="Hess W.R."/>
            <person name="Johnson Z.I."/>
            <person name="Land M.L."/>
            <person name="Lindell D."/>
            <person name="Post A.F."/>
            <person name="Regala W."/>
            <person name="Shah M."/>
            <person name="Shaw S.L."/>
            <person name="Steglich C."/>
            <person name="Sullivan M.B."/>
            <person name="Ting C.S."/>
            <person name="Tolonen A."/>
            <person name="Webb E.A."/>
            <person name="Zinser E.R."/>
            <person name="Chisholm S.W."/>
        </authorList>
    </citation>
    <scope>NUCLEOTIDE SEQUENCE [LARGE SCALE GENOMIC DNA]</scope>
    <source>
        <strain>MIT 9313</strain>
    </source>
</reference>
<protein>
    <recommendedName>
        <fullName evidence="1">Peptide deformylase 2</fullName>
        <shortName evidence="1">PDF 2</shortName>
        <ecNumber evidence="1">3.5.1.88</ecNumber>
    </recommendedName>
    <alternativeName>
        <fullName evidence="1">Polypeptide deformylase 2</fullName>
    </alternativeName>
</protein>
<proteinExistence type="inferred from homology"/>
<keyword id="KW-0378">Hydrolase</keyword>
<keyword id="KW-0408">Iron</keyword>
<keyword id="KW-0479">Metal-binding</keyword>
<keyword id="KW-0648">Protein biosynthesis</keyword>
<keyword id="KW-1185">Reference proteome</keyword>